<comment type="function">
    <text evidence="1">Component of the sulfite reductase complex that catalyzes the 6-electron reduction of sulfite to sulfide. This is one of several activities required for the biosynthesis of L-cysteine from sulfate. The flavoprotein component catalyzes the electron flow from NADPH -&gt; FAD -&gt; FMN to the hemoprotein component.</text>
</comment>
<comment type="catalytic activity">
    <reaction evidence="1">
        <text>hydrogen sulfide + 3 NADP(+) + 3 H2O = sulfite + 3 NADPH + 4 H(+)</text>
        <dbReference type="Rhea" id="RHEA:13801"/>
        <dbReference type="ChEBI" id="CHEBI:15377"/>
        <dbReference type="ChEBI" id="CHEBI:15378"/>
        <dbReference type="ChEBI" id="CHEBI:17359"/>
        <dbReference type="ChEBI" id="CHEBI:29919"/>
        <dbReference type="ChEBI" id="CHEBI:57783"/>
        <dbReference type="ChEBI" id="CHEBI:58349"/>
        <dbReference type="EC" id="1.8.1.2"/>
    </reaction>
</comment>
<comment type="cofactor">
    <cofactor evidence="1">
        <name>FAD</name>
        <dbReference type="ChEBI" id="CHEBI:57692"/>
    </cofactor>
    <text evidence="1">Binds 1 FAD per subunit.</text>
</comment>
<comment type="cofactor">
    <cofactor evidence="1">
        <name>FMN</name>
        <dbReference type="ChEBI" id="CHEBI:58210"/>
    </cofactor>
    <text evidence="1">Binds 1 FMN per subunit.</text>
</comment>
<comment type="pathway">
    <text evidence="1">Sulfur metabolism; hydrogen sulfide biosynthesis; hydrogen sulfide from sulfite (NADPH route): step 1/1.</text>
</comment>
<comment type="subunit">
    <text evidence="1">Alpha(8)-beta(8). The alpha component is a flavoprotein, the beta component is a hemoprotein.</text>
</comment>
<comment type="similarity">
    <text evidence="1">Belongs to the NADPH-dependent sulphite reductase flavoprotein subunit CysJ family.</text>
</comment>
<comment type="similarity">
    <text evidence="1">In the N-terminal section; belongs to the flavodoxin family.</text>
</comment>
<comment type="similarity">
    <text evidence="1">In the C-terminal section; belongs to the flavoprotein pyridine nucleotide cytochrome reductase family.</text>
</comment>
<reference key="1">
    <citation type="journal article" date="2008" name="J. Bacteriol.">
        <title>The pangenome structure of Escherichia coli: comparative genomic analysis of E. coli commensal and pathogenic isolates.</title>
        <authorList>
            <person name="Rasko D.A."/>
            <person name="Rosovitz M.J."/>
            <person name="Myers G.S.A."/>
            <person name="Mongodin E.F."/>
            <person name="Fricke W.F."/>
            <person name="Gajer P."/>
            <person name="Crabtree J."/>
            <person name="Sebaihia M."/>
            <person name="Thomson N.R."/>
            <person name="Chaudhuri R."/>
            <person name="Henderson I.R."/>
            <person name="Sperandio V."/>
            <person name="Ravel J."/>
        </authorList>
    </citation>
    <scope>NUCLEOTIDE SEQUENCE [LARGE SCALE GENOMIC DNA]</scope>
    <source>
        <strain>HS</strain>
    </source>
</reference>
<feature type="chain" id="PRO_1000087633" description="Sulfite reductase [NADPH] flavoprotein alpha-component">
    <location>
        <begin position="1"/>
        <end position="599"/>
    </location>
</feature>
<feature type="domain" description="Flavodoxin-like" evidence="1">
    <location>
        <begin position="64"/>
        <end position="202"/>
    </location>
</feature>
<feature type="domain" description="FAD-binding FR-type" evidence="1">
    <location>
        <begin position="234"/>
        <end position="448"/>
    </location>
</feature>
<feature type="binding site" evidence="1">
    <location>
        <begin position="70"/>
        <end position="75"/>
    </location>
    <ligand>
        <name>FMN</name>
        <dbReference type="ChEBI" id="CHEBI:58210"/>
    </ligand>
</feature>
<feature type="binding site" evidence="1">
    <location>
        <begin position="117"/>
        <end position="120"/>
    </location>
    <ligand>
        <name>FMN</name>
        <dbReference type="ChEBI" id="CHEBI:58210"/>
    </ligand>
</feature>
<feature type="binding site" evidence="1">
    <location>
        <begin position="153"/>
        <end position="162"/>
    </location>
    <ligand>
        <name>FMN</name>
        <dbReference type="ChEBI" id="CHEBI:58210"/>
    </ligand>
</feature>
<feature type="binding site" evidence="1">
    <location>
        <position position="322"/>
    </location>
    <ligand>
        <name>FAD</name>
        <dbReference type="ChEBI" id="CHEBI:57692"/>
    </ligand>
</feature>
<feature type="binding site" evidence="1">
    <location>
        <position position="356"/>
    </location>
    <ligand>
        <name>FAD</name>
        <dbReference type="ChEBI" id="CHEBI:57692"/>
    </ligand>
</feature>
<feature type="binding site" evidence="1">
    <location>
        <begin position="386"/>
        <end position="389"/>
    </location>
    <ligand>
        <name>FAD</name>
        <dbReference type="ChEBI" id="CHEBI:57692"/>
    </ligand>
</feature>
<feature type="binding site" evidence="1">
    <location>
        <begin position="404"/>
        <end position="406"/>
    </location>
    <ligand>
        <name>FAD</name>
        <dbReference type="ChEBI" id="CHEBI:57692"/>
    </ligand>
</feature>
<feature type="binding site" evidence="1">
    <location>
        <position position="410"/>
    </location>
    <ligand>
        <name>FAD</name>
        <dbReference type="ChEBI" id="CHEBI:57692"/>
    </ligand>
</feature>
<feature type="binding site" evidence="1">
    <location>
        <begin position="419"/>
        <end position="422"/>
    </location>
    <ligand>
        <name>FAD</name>
        <dbReference type="ChEBI" id="CHEBI:57692"/>
    </ligand>
</feature>
<feature type="binding site" evidence="1">
    <location>
        <begin position="519"/>
        <end position="520"/>
    </location>
    <ligand>
        <name>NADP(+)</name>
        <dbReference type="ChEBI" id="CHEBI:58349"/>
    </ligand>
</feature>
<feature type="binding site" evidence="1">
    <location>
        <begin position="525"/>
        <end position="529"/>
    </location>
    <ligand>
        <name>NADP(+)</name>
        <dbReference type="ChEBI" id="CHEBI:58349"/>
    </ligand>
</feature>
<feature type="binding site" evidence="1">
    <location>
        <position position="561"/>
    </location>
    <ligand>
        <name>NADP(+)</name>
        <dbReference type="ChEBI" id="CHEBI:58349"/>
    </ligand>
</feature>
<feature type="binding site" evidence="1">
    <location>
        <position position="599"/>
    </location>
    <ligand>
        <name>FAD</name>
        <dbReference type="ChEBI" id="CHEBI:57692"/>
    </ligand>
</feature>
<dbReference type="EC" id="1.8.1.2" evidence="1"/>
<dbReference type="EMBL" id="CP000802">
    <property type="protein sequence ID" value="ABV07149.1"/>
    <property type="molecule type" value="Genomic_DNA"/>
</dbReference>
<dbReference type="RefSeq" id="WP_000211941.1">
    <property type="nucleotide sequence ID" value="NC_009800.1"/>
</dbReference>
<dbReference type="BMRB" id="A8A3P5"/>
<dbReference type="SMR" id="A8A3P5"/>
<dbReference type="KEGG" id="ecx:EcHS_A2904"/>
<dbReference type="HOGENOM" id="CLU_001570_17_7_6"/>
<dbReference type="UniPathway" id="UPA00140">
    <property type="reaction ID" value="UER00207"/>
</dbReference>
<dbReference type="GO" id="GO:0005829">
    <property type="term" value="C:cytosol"/>
    <property type="evidence" value="ECO:0007669"/>
    <property type="project" value="TreeGrafter"/>
</dbReference>
<dbReference type="GO" id="GO:0050660">
    <property type="term" value="F:flavin adenine dinucleotide binding"/>
    <property type="evidence" value="ECO:0007669"/>
    <property type="project" value="InterPro"/>
</dbReference>
<dbReference type="GO" id="GO:0010181">
    <property type="term" value="F:FMN binding"/>
    <property type="evidence" value="ECO:0007669"/>
    <property type="project" value="InterPro"/>
</dbReference>
<dbReference type="GO" id="GO:0004783">
    <property type="term" value="F:sulfite reductase (NADPH) activity"/>
    <property type="evidence" value="ECO:0007669"/>
    <property type="project" value="UniProtKB-UniRule"/>
</dbReference>
<dbReference type="GO" id="GO:0019344">
    <property type="term" value="P:cysteine biosynthetic process"/>
    <property type="evidence" value="ECO:0007669"/>
    <property type="project" value="UniProtKB-KW"/>
</dbReference>
<dbReference type="GO" id="GO:0070814">
    <property type="term" value="P:hydrogen sulfide biosynthetic process"/>
    <property type="evidence" value="ECO:0007669"/>
    <property type="project" value="UniProtKB-UniRule"/>
</dbReference>
<dbReference type="GO" id="GO:0000103">
    <property type="term" value="P:sulfate assimilation"/>
    <property type="evidence" value="ECO:0007669"/>
    <property type="project" value="UniProtKB-UniRule"/>
</dbReference>
<dbReference type="CDD" id="cd06199">
    <property type="entry name" value="SiR"/>
    <property type="match status" value="1"/>
</dbReference>
<dbReference type="FunFam" id="3.40.50.80:FF:000001">
    <property type="entry name" value="NADPH--cytochrome P450 reductase 1"/>
    <property type="match status" value="1"/>
</dbReference>
<dbReference type="FunFam" id="1.20.990.10:FF:000004">
    <property type="entry name" value="Sulfite reductase [NADPH] flavoprotein alpha-component"/>
    <property type="match status" value="1"/>
</dbReference>
<dbReference type="FunFam" id="3.40.50.360:FF:000018">
    <property type="entry name" value="Sulfite reductase [NADPH] flavoprotein alpha-component"/>
    <property type="match status" value="1"/>
</dbReference>
<dbReference type="Gene3D" id="3.40.50.360">
    <property type="match status" value="1"/>
</dbReference>
<dbReference type="Gene3D" id="1.20.990.10">
    <property type="entry name" value="NADPH-cytochrome p450 Reductase, Chain A, domain 3"/>
    <property type="match status" value="1"/>
</dbReference>
<dbReference type="Gene3D" id="3.40.50.80">
    <property type="entry name" value="Nucleotide-binding domain of ferredoxin-NADP reductase (FNR) module"/>
    <property type="match status" value="1"/>
</dbReference>
<dbReference type="Gene3D" id="2.40.30.10">
    <property type="entry name" value="Translation factors"/>
    <property type="match status" value="1"/>
</dbReference>
<dbReference type="HAMAP" id="MF_01541">
    <property type="entry name" value="CysJ"/>
    <property type="match status" value="1"/>
</dbReference>
<dbReference type="InterPro" id="IPR010199">
    <property type="entry name" value="CysJ"/>
</dbReference>
<dbReference type="InterPro" id="IPR003097">
    <property type="entry name" value="CysJ-like_FAD-binding"/>
</dbReference>
<dbReference type="InterPro" id="IPR029758">
    <property type="entry name" value="CysJ_Proteobact"/>
</dbReference>
<dbReference type="InterPro" id="IPR017927">
    <property type="entry name" value="FAD-bd_FR_type"/>
</dbReference>
<dbReference type="InterPro" id="IPR001094">
    <property type="entry name" value="Flavdoxin-like"/>
</dbReference>
<dbReference type="InterPro" id="IPR008254">
    <property type="entry name" value="Flavodoxin/NO_synth"/>
</dbReference>
<dbReference type="InterPro" id="IPR001709">
    <property type="entry name" value="Flavoprot_Pyr_Nucl_cyt_Rdtase"/>
</dbReference>
<dbReference type="InterPro" id="IPR029039">
    <property type="entry name" value="Flavoprotein-like_sf"/>
</dbReference>
<dbReference type="InterPro" id="IPR039261">
    <property type="entry name" value="FNR_nucleotide-bd"/>
</dbReference>
<dbReference type="InterPro" id="IPR023173">
    <property type="entry name" value="NADPH_Cyt_P450_Rdtase_alpha"/>
</dbReference>
<dbReference type="InterPro" id="IPR001433">
    <property type="entry name" value="OxRdtase_FAD/NAD-bd"/>
</dbReference>
<dbReference type="InterPro" id="IPR017938">
    <property type="entry name" value="Riboflavin_synthase-like_b-brl"/>
</dbReference>
<dbReference type="NCBIfam" id="TIGR01931">
    <property type="entry name" value="cysJ"/>
    <property type="match status" value="1"/>
</dbReference>
<dbReference type="NCBIfam" id="NF004859">
    <property type="entry name" value="PRK06214.1"/>
    <property type="match status" value="1"/>
</dbReference>
<dbReference type="NCBIfam" id="NF008197">
    <property type="entry name" value="PRK10953.1"/>
    <property type="match status" value="1"/>
</dbReference>
<dbReference type="PANTHER" id="PTHR19384:SF128">
    <property type="entry name" value="NADPH OXIDOREDUCTASE A"/>
    <property type="match status" value="1"/>
</dbReference>
<dbReference type="PANTHER" id="PTHR19384">
    <property type="entry name" value="NITRIC OXIDE SYNTHASE-RELATED"/>
    <property type="match status" value="1"/>
</dbReference>
<dbReference type="Pfam" id="PF00667">
    <property type="entry name" value="FAD_binding_1"/>
    <property type="match status" value="1"/>
</dbReference>
<dbReference type="Pfam" id="PF00258">
    <property type="entry name" value="Flavodoxin_1"/>
    <property type="match status" value="1"/>
</dbReference>
<dbReference type="Pfam" id="PF00175">
    <property type="entry name" value="NAD_binding_1"/>
    <property type="match status" value="1"/>
</dbReference>
<dbReference type="PIRSF" id="PIRSF000207">
    <property type="entry name" value="SiR-FP_CysJ"/>
    <property type="match status" value="1"/>
</dbReference>
<dbReference type="PRINTS" id="PR00369">
    <property type="entry name" value="FLAVODOXIN"/>
</dbReference>
<dbReference type="PRINTS" id="PR00371">
    <property type="entry name" value="FPNCR"/>
</dbReference>
<dbReference type="SUPFAM" id="SSF52343">
    <property type="entry name" value="Ferredoxin reductase-like, C-terminal NADP-linked domain"/>
    <property type="match status" value="1"/>
</dbReference>
<dbReference type="SUPFAM" id="SSF52218">
    <property type="entry name" value="Flavoproteins"/>
    <property type="match status" value="1"/>
</dbReference>
<dbReference type="SUPFAM" id="SSF63380">
    <property type="entry name" value="Riboflavin synthase domain-like"/>
    <property type="match status" value="1"/>
</dbReference>
<dbReference type="PROSITE" id="PS51384">
    <property type="entry name" value="FAD_FR"/>
    <property type="match status" value="1"/>
</dbReference>
<dbReference type="PROSITE" id="PS50902">
    <property type="entry name" value="FLAVODOXIN_LIKE"/>
    <property type="match status" value="1"/>
</dbReference>
<proteinExistence type="inferred from homology"/>
<evidence type="ECO:0000255" key="1">
    <source>
        <dbReference type="HAMAP-Rule" id="MF_01541"/>
    </source>
</evidence>
<organism>
    <name type="scientific">Escherichia coli O9:H4 (strain HS)</name>
    <dbReference type="NCBI Taxonomy" id="331112"/>
    <lineage>
        <taxon>Bacteria</taxon>
        <taxon>Pseudomonadati</taxon>
        <taxon>Pseudomonadota</taxon>
        <taxon>Gammaproteobacteria</taxon>
        <taxon>Enterobacterales</taxon>
        <taxon>Enterobacteriaceae</taxon>
        <taxon>Escherichia</taxon>
    </lineage>
</organism>
<keyword id="KW-0028">Amino-acid biosynthesis</keyword>
<keyword id="KW-0198">Cysteine biosynthesis</keyword>
<keyword id="KW-0249">Electron transport</keyword>
<keyword id="KW-0274">FAD</keyword>
<keyword id="KW-0285">Flavoprotein</keyword>
<keyword id="KW-0288">FMN</keyword>
<keyword id="KW-0521">NADP</keyword>
<keyword id="KW-0560">Oxidoreductase</keyword>
<keyword id="KW-0813">Transport</keyword>
<accession>A8A3P5</accession>
<gene>
    <name evidence="1" type="primary">cysJ</name>
    <name type="ordered locus">EcHS_A2904</name>
</gene>
<protein>
    <recommendedName>
        <fullName evidence="1">Sulfite reductase [NADPH] flavoprotein alpha-component</fullName>
        <shortName evidence="1">SiR-FP</shortName>
        <ecNumber evidence="1">1.8.1.2</ecNumber>
    </recommendedName>
</protein>
<sequence length="599" mass="66342">MTTQVPPSALLPLNPEQLARLQAATTDLTPTQLAWVSGYFWGVLNQQPAALAATPAPAAEMPGITIISASQTGNARRVAEALRDDLLTAKLNVKLVNAGDYKFKQIASEKLLIVVTSTQGEGEPPEEAVALHKFLFSKKAPKLENTAFAVFSLGDSSYEFFCQSGKDFDSKLAELGGERLLDRVDADVEYQTAASEWRARVVDALKSRAPVAAPSQSVATGAVNEIHTSPYSKDSPLVASLSVNQKITGRNSEKDVRHIEIDLGDSGLRYQPGDALGVWYQNDPALVKELVELLWLKGDEPVTVEGKTLPLNEALQWHFELTVNTANIVENYATLTRSETLLPLVGDKAKLQHYAATTPIVDMVRFSPAQLDAEALINLLRPLTPRLYSIASSQAEVENEVHVTVGVVRYDVEGRARAGGASSFLADRVEEEGEVRVFIEHNDNFRLPANPETPVIMIGPGTGIAPFRAFMQQRAADEAPGKNWLFFGNPHFTEDFLYQVEWQRYVKEGVLTRIDLAWSRDQKEKVYVQDKLREQGAELWRWINDGAHIYVCGDANRMAKDVEQALLEVIAEFGGMDTEAADEFLSELRVERRYQRDVY</sequence>
<name>CYSJ_ECOHS</name>